<accession>Q9SXX7</accession>
<accession>A3CIF7</accession>
<accession>Q0IMM5</accession>
<proteinExistence type="inferred from homology"/>
<reference key="1">
    <citation type="journal article" date="1999" name="Genes Genet. Syst.">
        <title>Identification of cDNA encoding cytochrome c oxidase subunit 5c (COX5c) from rice: comparison of its expression with nuclear-encoded and mitochondrial-encoded COX genes.</title>
        <authorList>
            <person name="Hamanaka S."/>
            <person name="Ohtsu K."/>
            <person name="Kadowaki K."/>
            <person name="Nakazono M."/>
            <person name="Hirai A."/>
        </authorList>
    </citation>
    <scope>NUCLEOTIDE SEQUENCE [MRNA]</scope>
    <source>
        <strain>cv. Nipponbare</strain>
    </source>
</reference>
<reference key="2">
    <citation type="journal article" date="2005" name="Nature">
        <title>The map-based sequence of the rice genome.</title>
        <authorList>
            <consortium name="International rice genome sequencing project (IRGSP)"/>
        </authorList>
    </citation>
    <scope>NUCLEOTIDE SEQUENCE [LARGE SCALE GENOMIC DNA]</scope>
    <source>
        <strain>cv. Nipponbare</strain>
    </source>
</reference>
<reference key="3">
    <citation type="journal article" date="2008" name="Nucleic Acids Res.">
        <title>The rice annotation project database (RAP-DB): 2008 update.</title>
        <authorList>
            <consortium name="The rice annotation project (RAP)"/>
        </authorList>
    </citation>
    <scope>GENOME REANNOTATION</scope>
    <source>
        <strain>cv. Nipponbare</strain>
    </source>
</reference>
<reference key="4">
    <citation type="journal article" date="2013" name="Rice">
        <title>Improvement of the Oryza sativa Nipponbare reference genome using next generation sequence and optical map data.</title>
        <authorList>
            <person name="Kawahara Y."/>
            <person name="de la Bastide M."/>
            <person name="Hamilton J.P."/>
            <person name="Kanamori H."/>
            <person name="McCombie W.R."/>
            <person name="Ouyang S."/>
            <person name="Schwartz D.C."/>
            <person name="Tanaka T."/>
            <person name="Wu J."/>
            <person name="Zhou S."/>
            <person name="Childs K.L."/>
            <person name="Davidson R.M."/>
            <person name="Lin H."/>
            <person name="Quesada-Ocampo L."/>
            <person name="Vaillancourt B."/>
            <person name="Sakai H."/>
            <person name="Lee S.S."/>
            <person name="Kim J."/>
            <person name="Numa H."/>
            <person name="Itoh T."/>
            <person name="Buell C.R."/>
            <person name="Matsumoto T."/>
        </authorList>
    </citation>
    <scope>GENOME REANNOTATION</scope>
    <source>
        <strain>cv. Nipponbare</strain>
    </source>
</reference>
<reference key="5">
    <citation type="journal article" date="2005" name="PLoS Biol.">
        <title>The genomes of Oryza sativa: a history of duplications.</title>
        <authorList>
            <person name="Yu J."/>
            <person name="Wang J."/>
            <person name="Lin W."/>
            <person name="Li S."/>
            <person name="Li H."/>
            <person name="Zhou J."/>
            <person name="Ni P."/>
            <person name="Dong W."/>
            <person name="Hu S."/>
            <person name="Zeng C."/>
            <person name="Zhang J."/>
            <person name="Zhang Y."/>
            <person name="Li R."/>
            <person name="Xu Z."/>
            <person name="Li S."/>
            <person name="Li X."/>
            <person name="Zheng H."/>
            <person name="Cong L."/>
            <person name="Lin L."/>
            <person name="Yin J."/>
            <person name="Geng J."/>
            <person name="Li G."/>
            <person name="Shi J."/>
            <person name="Liu J."/>
            <person name="Lv H."/>
            <person name="Li J."/>
            <person name="Wang J."/>
            <person name="Deng Y."/>
            <person name="Ran L."/>
            <person name="Shi X."/>
            <person name="Wang X."/>
            <person name="Wu Q."/>
            <person name="Li C."/>
            <person name="Ren X."/>
            <person name="Wang J."/>
            <person name="Wang X."/>
            <person name="Li D."/>
            <person name="Liu D."/>
            <person name="Zhang X."/>
            <person name="Ji Z."/>
            <person name="Zhao W."/>
            <person name="Sun Y."/>
            <person name="Zhang Z."/>
            <person name="Bao J."/>
            <person name="Han Y."/>
            <person name="Dong L."/>
            <person name="Ji J."/>
            <person name="Chen P."/>
            <person name="Wu S."/>
            <person name="Liu J."/>
            <person name="Xiao Y."/>
            <person name="Bu D."/>
            <person name="Tan J."/>
            <person name="Yang L."/>
            <person name="Ye C."/>
            <person name="Zhang J."/>
            <person name="Xu J."/>
            <person name="Zhou Y."/>
            <person name="Yu Y."/>
            <person name="Zhang B."/>
            <person name="Zhuang S."/>
            <person name="Wei H."/>
            <person name="Liu B."/>
            <person name="Lei M."/>
            <person name="Yu H."/>
            <person name="Li Y."/>
            <person name="Xu H."/>
            <person name="Wei S."/>
            <person name="He X."/>
            <person name="Fang L."/>
            <person name="Zhang Z."/>
            <person name="Zhang Y."/>
            <person name="Huang X."/>
            <person name="Su Z."/>
            <person name="Tong W."/>
            <person name="Li J."/>
            <person name="Tong Z."/>
            <person name="Li S."/>
            <person name="Ye J."/>
            <person name="Wang L."/>
            <person name="Fang L."/>
            <person name="Lei T."/>
            <person name="Chen C.-S."/>
            <person name="Chen H.-C."/>
            <person name="Xu Z."/>
            <person name="Li H."/>
            <person name="Huang H."/>
            <person name="Zhang F."/>
            <person name="Xu H."/>
            <person name="Li N."/>
            <person name="Zhao C."/>
            <person name="Li S."/>
            <person name="Dong L."/>
            <person name="Huang Y."/>
            <person name="Li L."/>
            <person name="Xi Y."/>
            <person name="Qi Q."/>
            <person name="Li W."/>
            <person name="Zhang B."/>
            <person name="Hu W."/>
            <person name="Zhang Y."/>
            <person name="Tian X."/>
            <person name="Jiao Y."/>
            <person name="Liang X."/>
            <person name="Jin J."/>
            <person name="Gao L."/>
            <person name="Zheng W."/>
            <person name="Hao B."/>
            <person name="Liu S.-M."/>
            <person name="Wang W."/>
            <person name="Yuan L."/>
            <person name="Cao M."/>
            <person name="McDermott J."/>
            <person name="Samudrala R."/>
            <person name="Wang J."/>
            <person name="Wong G.K.-S."/>
            <person name="Yang H."/>
        </authorList>
    </citation>
    <scope>NUCLEOTIDE SEQUENCE [LARGE SCALE GENOMIC DNA]</scope>
    <source>
        <strain>cv. Nipponbare</strain>
    </source>
</reference>
<name>COX5C_ORYSJ</name>
<feature type="initiator methionine" description="Removed" evidence="1">
    <location>
        <position position="1"/>
    </location>
</feature>
<feature type="chain" id="PRO_0000128193" description="Cytochrome c oxidase subunit 5C">
    <location>
        <begin position="2"/>
        <end position="63"/>
    </location>
</feature>
<feature type="transmembrane region" description="Helical" evidence="2">
    <location>
        <begin position="16"/>
        <end position="34"/>
    </location>
</feature>
<organism>
    <name type="scientific">Oryza sativa subsp. japonica</name>
    <name type="common">Rice</name>
    <dbReference type="NCBI Taxonomy" id="39947"/>
    <lineage>
        <taxon>Eukaryota</taxon>
        <taxon>Viridiplantae</taxon>
        <taxon>Streptophyta</taxon>
        <taxon>Embryophyta</taxon>
        <taxon>Tracheophyta</taxon>
        <taxon>Spermatophyta</taxon>
        <taxon>Magnoliopsida</taxon>
        <taxon>Liliopsida</taxon>
        <taxon>Poales</taxon>
        <taxon>Poaceae</taxon>
        <taxon>BOP clade</taxon>
        <taxon>Oryzoideae</taxon>
        <taxon>Oryzeae</taxon>
        <taxon>Oryzinae</taxon>
        <taxon>Oryza</taxon>
        <taxon>Oryza sativa</taxon>
    </lineage>
</organism>
<keyword id="KW-0472">Membrane</keyword>
<keyword id="KW-0496">Mitochondrion</keyword>
<keyword id="KW-0999">Mitochondrion inner membrane</keyword>
<keyword id="KW-1185">Reference proteome</keyword>
<keyword id="KW-0812">Transmembrane</keyword>
<keyword id="KW-1133">Transmembrane helix</keyword>
<protein>
    <recommendedName>
        <fullName>Cytochrome c oxidase subunit 5C</fullName>
    </recommendedName>
    <alternativeName>
        <fullName>Cytochrome c oxidase polypeptide Vc</fullName>
    </alternativeName>
</protein>
<evidence type="ECO:0000250" key="1"/>
<evidence type="ECO:0000255" key="2"/>
<evidence type="ECO:0000305" key="3"/>
<evidence type="ECO:0000312" key="4">
    <source>
        <dbReference type="EMBL" id="EAZ20870.1"/>
    </source>
</evidence>
<sequence length="63" mass="6978">MAGGRIAHATLKGPSVVKEICIGLTLGLVAGGLWKMHHWNEQRKTRSFYDMLEKGQISVVVEE</sequence>
<comment type="function">
    <text evidence="1">This protein is one of the nuclear-coded polypeptide chains of cytochrome c oxidase, the terminal oxidase in mitochondrial electron transport.</text>
</comment>
<comment type="subcellular location">
    <subcellularLocation>
        <location evidence="1">Mitochondrion inner membrane</location>
    </subcellularLocation>
</comment>
<comment type="similarity">
    <text evidence="3">Belongs to the cytochrome c oxidase subunit 5C family.</text>
</comment>
<gene>
    <name type="primary">COX5C</name>
    <name type="ordered locus">Os12g0561000</name>
    <name type="ordered locus">LOC_Os12g37419</name>
    <name evidence="4" type="ORF">OsJ_36508</name>
</gene>
<dbReference type="EMBL" id="AB027123">
    <property type="protein sequence ID" value="BAA77682.1"/>
    <property type="molecule type" value="mRNA"/>
</dbReference>
<dbReference type="EMBL" id="AP008218">
    <property type="protein sequence ID" value="BAF30040.1"/>
    <property type="molecule type" value="Genomic_DNA"/>
</dbReference>
<dbReference type="EMBL" id="AP014968">
    <property type="protein sequence ID" value="BAT17642.1"/>
    <property type="molecule type" value="Genomic_DNA"/>
</dbReference>
<dbReference type="EMBL" id="CM000149">
    <property type="protein sequence ID" value="EAZ20870.1"/>
    <property type="molecule type" value="Genomic_DNA"/>
</dbReference>
<dbReference type="PIR" id="T52093">
    <property type="entry name" value="T52093"/>
</dbReference>
<dbReference type="RefSeq" id="XP_015619874.1">
    <property type="nucleotide sequence ID" value="XM_015764388.1"/>
</dbReference>
<dbReference type="SMR" id="Q9SXX7"/>
<dbReference type="FunCoup" id="Q9SXX7">
    <property type="interactions" value="1113"/>
</dbReference>
<dbReference type="STRING" id="39947.Q9SXX7"/>
<dbReference type="PaxDb" id="39947-Q9SXX7"/>
<dbReference type="EnsemblPlants" id="Os12t0561000-01">
    <property type="protein sequence ID" value="Os12t0561000-01"/>
    <property type="gene ID" value="Os12g0561000"/>
</dbReference>
<dbReference type="Gramene" id="Os12t0561000-01">
    <property type="protein sequence ID" value="Os12t0561000-01"/>
    <property type="gene ID" value="Os12g0561000"/>
</dbReference>
<dbReference type="KEGG" id="dosa:Os12g0561000"/>
<dbReference type="eggNOG" id="ENOG502S8H1">
    <property type="taxonomic scope" value="Eukaryota"/>
</dbReference>
<dbReference type="HOGENOM" id="CLU_177335_1_0_1"/>
<dbReference type="InParanoid" id="Q9SXX7"/>
<dbReference type="OMA" id="GTLWKMH"/>
<dbReference type="OrthoDB" id="506921at2759"/>
<dbReference type="Proteomes" id="UP000000763">
    <property type="component" value="Chromosome 12"/>
</dbReference>
<dbReference type="Proteomes" id="UP000007752">
    <property type="component" value="Chromosome 12"/>
</dbReference>
<dbReference type="Proteomes" id="UP000059680">
    <property type="component" value="Chromosome 12"/>
</dbReference>
<dbReference type="GO" id="GO:0005743">
    <property type="term" value="C:mitochondrial inner membrane"/>
    <property type="evidence" value="ECO:0007669"/>
    <property type="project" value="UniProtKB-SubCell"/>
</dbReference>
<dbReference type="InterPro" id="IPR008432">
    <property type="entry name" value="COX5C"/>
</dbReference>
<dbReference type="PANTHER" id="PTHR34372">
    <property type="entry name" value="CYTOCHROME C OXIDASE SUBUNIT 5C-2-RELATED"/>
    <property type="match status" value="1"/>
</dbReference>
<dbReference type="PANTHER" id="PTHR34372:SF2">
    <property type="entry name" value="CYTOCHROME C OXIDASE SUBUNIT 5C-2-RELATED"/>
    <property type="match status" value="1"/>
</dbReference>
<dbReference type="PIRSF" id="PIRSF038131">
    <property type="entry name" value="COX5C"/>
    <property type="match status" value="1"/>
</dbReference>